<gene>
    <name evidence="1" type="primary">rpsE</name>
    <name type="ordered locus">BOV_1179</name>
</gene>
<organism>
    <name type="scientific">Brucella ovis (strain ATCC 25840 / 63/290 / NCTC 10512)</name>
    <dbReference type="NCBI Taxonomy" id="444178"/>
    <lineage>
        <taxon>Bacteria</taxon>
        <taxon>Pseudomonadati</taxon>
        <taxon>Pseudomonadota</taxon>
        <taxon>Alphaproteobacteria</taxon>
        <taxon>Hyphomicrobiales</taxon>
        <taxon>Brucellaceae</taxon>
        <taxon>Brucella/Ochrobactrum group</taxon>
        <taxon>Brucella</taxon>
    </lineage>
</organism>
<keyword id="KW-0687">Ribonucleoprotein</keyword>
<keyword id="KW-0689">Ribosomal protein</keyword>
<keyword id="KW-0694">RNA-binding</keyword>
<keyword id="KW-0699">rRNA-binding</keyword>
<comment type="function">
    <text evidence="1">With S4 and S12 plays an important role in translational accuracy.</text>
</comment>
<comment type="function">
    <text evidence="1">Located at the back of the 30S subunit body where it stabilizes the conformation of the head with respect to the body.</text>
</comment>
<comment type="subunit">
    <text evidence="1">Part of the 30S ribosomal subunit. Contacts proteins S4 and S8.</text>
</comment>
<comment type="domain">
    <text>The N-terminal domain interacts with the head of the 30S subunit; the C-terminal domain interacts with the body and contacts protein S4. The interaction surface between S4 and S5 is involved in control of translational fidelity.</text>
</comment>
<comment type="similarity">
    <text evidence="1">Belongs to the universal ribosomal protein uS5 family.</text>
</comment>
<protein>
    <recommendedName>
        <fullName evidence="1">Small ribosomal subunit protein uS5</fullName>
    </recommendedName>
    <alternativeName>
        <fullName evidence="2">30S ribosomal protein S5</fullName>
    </alternativeName>
</protein>
<reference key="1">
    <citation type="journal article" date="2009" name="PLoS ONE">
        <title>Genome degradation in Brucella ovis corresponds with narrowing of its host range and tissue tropism.</title>
        <authorList>
            <person name="Tsolis R.M."/>
            <person name="Seshadri R."/>
            <person name="Santos R.L."/>
            <person name="Sangari F.J."/>
            <person name="Lobo J.M."/>
            <person name="de Jong M.F."/>
            <person name="Ren Q."/>
            <person name="Myers G."/>
            <person name="Brinkac L.M."/>
            <person name="Nelson W.C."/>
            <person name="Deboy R.T."/>
            <person name="Angiuoli S."/>
            <person name="Khouri H."/>
            <person name="Dimitrov G."/>
            <person name="Robinson J.R."/>
            <person name="Mulligan S."/>
            <person name="Walker R.L."/>
            <person name="Elzer P.E."/>
            <person name="Hassan K.A."/>
            <person name="Paulsen I.T."/>
        </authorList>
    </citation>
    <scope>NUCLEOTIDE SEQUENCE [LARGE SCALE GENOMIC DNA]</scope>
    <source>
        <strain>ATCC 25840 / 63/290 / NCTC 10512</strain>
    </source>
</reference>
<evidence type="ECO:0000255" key="1">
    <source>
        <dbReference type="HAMAP-Rule" id="MF_01307"/>
    </source>
</evidence>
<evidence type="ECO:0000305" key="2"/>
<feature type="chain" id="PRO_0000323082" description="Small ribosomal subunit protein uS5">
    <location>
        <begin position="1"/>
        <end position="186"/>
    </location>
</feature>
<feature type="domain" description="S5 DRBM" evidence="1">
    <location>
        <begin position="20"/>
        <end position="83"/>
    </location>
</feature>
<proteinExistence type="inferred from homology"/>
<sequence length="186" mass="20478">MAQRERNREERGREERDSEFVDKLVHINRVAKVVKGGRRFGFAALIVVGDQKGRVGFGHGKAREVPEAIRKATEAAKRDMIFVPLRSGRTLHHDVEGRHGAGKVLLRAAPAGKGIIAGGPMRAVFETLGVQDVVAKSLGSSNPYNMVRATFDALKHQMHPKDIAAQRGIKYSTLQARRHDVVGSEE</sequence>
<dbReference type="EMBL" id="CP000708">
    <property type="protein sequence ID" value="ABQ61268.1"/>
    <property type="molecule type" value="Genomic_DNA"/>
</dbReference>
<dbReference type="RefSeq" id="WP_006012776.1">
    <property type="nucleotide sequence ID" value="NC_009505.1"/>
</dbReference>
<dbReference type="SMR" id="A5VQY9"/>
<dbReference type="GeneID" id="45124584"/>
<dbReference type="KEGG" id="bov:BOV_1179"/>
<dbReference type="HOGENOM" id="CLU_065898_2_2_5"/>
<dbReference type="PhylomeDB" id="A5VQY9"/>
<dbReference type="Proteomes" id="UP000006383">
    <property type="component" value="Chromosome I"/>
</dbReference>
<dbReference type="GO" id="GO:0015935">
    <property type="term" value="C:small ribosomal subunit"/>
    <property type="evidence" value="ECO:0007669"/>
    <property type="project" value="InterPro"/>
</dbReference>
<dbReference type="GO" id="GO:0019843">
    <property type="term" value="F:rRNA binding"/>
    <property type="evidence" value="ECO:0007669"/>
    <property type="project" value="UniProtKB-UniRule"/>
</dbReference>
<dbReference type="GO" id="GO:0003735">
    <property type="term" value="F:structural constituent of ribosome"/>
    <property type="evidence" value="ECO:0007669"/>
    <property type="project" value="InterPro"/>
</dbReference>
<dbReference type="GO" id="GO:0006412">
    <property type="term" value="P:translation"/>
    <property type="evidence" value="ECO:0007669"/>
    <property type="project" value="UniProtKB-UniRule"/>
</dbReference>
<dbReference type="FunFam" id="3.30.160.20:FF:000001">
    <property type="entry name" value="30S ribosomal protein S5"/>
    <property type="match status" value="1"/>
</dbReference>
<dbReference type="FunFam" id="3.30.230.10:FF:000002">
    <property type="entry name" value="30S ribosomal protein S5"/>
    <property type="match status" value="1"/>
</dbReference>
<dbReference type="Gene3D" id="3.30.160.20">
    <property type="match status" value="1"/>
</dbReference>
<dbReference type="Gene3D" id="3.30.230.10">
    <property type="match status" value="1"/>
</dbReference>
<dbReference type="HAMAP" id="MF_01307_B">
    <property type="entry name" value="Ribosomal_uS5_B"/>
    <property type="match status" value="1"/>
</dbReference>
<dbReference type="InterPro" id="IPR020568">
    <property type="entry name" value="Ribosomal_Su5_D2-typ_SF"/>
</dbReference>
<dbReference type="InterPro" id="IPR000851">
    <property type="entry name" value="Ribosomal_uS5"/>
</dbReference>
<dbReference type="InterPro" id="IPR005712">
    <property type="entry name" value="Ribosomal_uS5_bac-type"/>
</dbReference>
<dbReference type="InterPro" id="IPR005324">
    <property type="entry name" value="Ribosomal_uS5_C"/>
</dbReference>
<dbReference type="InterPro" id="IPR013810">
    <property type="entry name" value="Ribosomal_uS5_N"/>
</dbReference>
<dbReference type="InterPro" id="IPR018192">
    <property type="entry name" value="Ribosomal_uS5_N_CS"/>
</dbReference>
<dbReference type="InterPro" id="IPR014721">
    <property type="entry name" value="Ribsml_uS5_D2-typ_fold_subgr"/>
</dbReference>
<dbReference type="NCBIfam" id="TIGR01021">
    <property type="entry name" value="rpsE_bact"/>
    <property type="match status" value="1"/>
</dbReference>
<dbReference type="PANTHER" id="PTHR48277">
    <property type="entry name" value="MITOCHONDRIAL RIBOSOMAL PROTEIN S5"/>
    <property type="match status" value="1"/>
</dbReference>
<dbReference type="PANTHER" id="PTHR48277:SF1">
    <property type="entry name" value="MITOCHONDRIAL RIBOSOMAL PROTEIN S5"/>
    <property type="match status" value="1"/>
</dbReference>
<dbReference type="Pfam" id="PF00333">
    <property type="entry name" value="Ribosomal_S5"/>
    <property type="match status" value="1"/>
</dbReference>
<dbReference type="Pfam" id="PF03719">
    <property type="entry name" value="Ribosomal_S5_C"/>
    <property type="match status" value="1"/>
</dbReference>
<dbReference type="SUPFAM" id="SSF54768">
    <property type="entry name" value="dsRNA-binding domain-like"/>
    <property type="match status" value="1"/>
</dbReference>
<dbReference type="SUPFAM" id="SSF54211">
    <property type="entry name" value="Ribosomal protein S5 domain 2-like"/>
    <property type="match status" value="1"/>
</dbReference>
<dbReference type="PROSITE" id="PS00585">
    <property type="entry name" value="RIBOSOMAL_S5"/>
    <property type="match status" value="1"/>
</dbReference>
<dbReference type="PROSITE" id="PS50881">
    <property type="entry name" value="S5_DSRBD"/>
    <property type="match status" value="1"/>
</dbReference>
<accession>A5VQY9</accession>
<name>RS5_BRUO2</name>